<name>UBIB_BURM7</name>
<gene>
    <name evidence="1" type="primary">ubiB</name>
    <name type="ordered locus">BMA10247_2401</name>
</gene>
<protein>
    <recommendedName>
        <fullName evidence="1">Probable protein kinase UbiB</fullName>
        <ecNumber evidence="1">2.7.-.-</ecNumber>
    </recommendedName>
    <alternativeName>
        <fullName evidence="1">Ubiquinone biosynthesis protein UbiB</fullName>
    </alternativeName>
</protein>
<reference key="1">
    <citation type="journal article" date="2010" name="Genome Biol. Evol.">
        <title>Continuing evolution of Burkholderia mallei through genome reduction and large-scale rearrangements.</title>
        <authorList>
            <person name="Losada L."/>
            <person name="Ronning C.M."/>
            <person name="DeShazer D."/>
            <person name="Woods D."/>
            <person name="Fedorova N."/>
            <person name="Kim H.S."/>
            <person name="Shabalina S.A."/>
            <person name="Pearson T.R."/>
            <person name="Brinkac L."/>
            <person name="Tan P."/>
            <person name="Nandi T."/>
            <person name="Crabtree J."/>
            <person name="Badger J."/>
            <person name="Beckstrom-Sternberg S."/>
            <person name="Saqib M."/>
            <person name="Schutzer S.E."/>
            <person name="Keim P."/>
            <person name="Nierman W.C."/>
        </authorList>
    </citation>
    <scope>NUCLEOTIDE SEQUENCE [LARGE SCALE GENOMIC DNA]</scope>
    <source>
        <strain>NCTC 10247</strain>
    </source>
</reference>
<comment type="function">
    <text evidence="1">Is probably a protein kinase regulator of UbiI activity which is involved in aerobic coenzyme Q (ubiquinone) biosynthesis.</text>
</comment>
<comment type="pathway">
    <text>Cofactor biosynthesis; ubiquinone biosynthesis [regulation].</text>
</comment>
<comment type="subcellular location">
    <subcellularLocation>
        <location evidence="1">Cell inner membrane</location>
        <topology evidence="1">Single-pass membrane protein</topology>
    </subcellularLocation>
</comment>
<comment type="similarity">
    <text evidence="1">Belongs to the ABC1 family. UbiB subfamily.</text>
</comment>
<keyword id="KW-0067">ATP-binding</keyword>
<keyword id="KW-0997">Cell inner membrane</keyword>
<keyword id="KW-1003">Cell membrane</keyword>
<keyword id="KW-0418">Kinase</keyword>
<keyword id="KW-0472">Membrane</keyword>
<keyword id="KW-0547">Nucleotide-binding</keyword>
<keyword id="KW-0808">Transferase</keyword>
<keyword id="KW-0812">Transmembrane</keyword>
<keyword id="KW-1133">Transmembrane helix</keyword>
<keyword id="KW-0831">Ubiquinone biosynthesis</keyword>
<organism>
    <name type="scientific">Burkholderia mallei (strain NCTC 10247)</name>
    <dbReference type="NCBI Taxonomy" id="320389"/>
    <lineage>
        <taxon>Bacteria</taxon>
        <taxon>Pseudomonadati</taxon>
        <taxon>Pseudomonadota</taxon>
        <taxon>Betaproteobacteria</taxon>
        <taxon>Burkholderiales</taxon>
        <taxon>Burkholderiaceae</taxon>
        <taxon>Burkholderia</taxon>
        <taxon>pseudomallei group</taxon>
    </lineage>
</organism>
<proteinExistence type="inferred from homology"/>
<feature type="chain" id="PRO_1000123891" description="Probable protein kinase UbiB">
    <location>
        <begin position="1"/>
        <end position="525"/>
    </location>
</feature>
<feature type="transmembrane region" description="Helical" evidence="1">
    <location>
        <begin position="501"/>
        <end position="521"/>
    </location>
</feature>
<feature type="domain" description="Protein kinase" evidence="1">
    <location>
        <begin position="118"/>
        <end position="500"/>
    </location>
</feature>
<feature type="active site" description="Proton acceptor" evidence="1">
    <location>
        <position position="285"/>
    </location>
</feature>
<feature type="binding site" evidence="1">
    <location>
        <begin position="124"/>
        <end position="132"/>
    </location>
    <ligand>
        <name>ATP</name>
        <dbReference type="ChEBI" id="CHEBI:30616"/>
    </ligand>
</feature>
<feature type="binding site" evidence="1">
    <location>
        <position position="150"/>
    </location>
    <ligand>
        <name>ATP</name>
        <dbReference type="ChEBI" id="CHEBI:30616"/>
    </ligand>
</feature>
<sequence>MRIFRFVKIVFTVIRFGLDEVMLSRIENPRVKLLLRITTIGRRFADPPAVRLRRALESLGPIFVKFGQVLSTRRDLLPVDFANELAKLQDQVPPFDSAVAIAIVEKSLGARIDVLFDEFERVPVASASIAQVHFAKLKQGEHKGKAVAVKVLRPNMLPVIDSDLALMRDIATWAERLWADGRRLKPREVVAEFDKYLHDELDLMREAANGSQLRRNFAGLDLLLVPEMFWDYSTPAVLVMERMTGVPISQVDTLRAAGVDIPKLAREGVEIFFTQVFRDGFFHADMHPGNIQVSLDPKHFGRYIALDFGIVGALSDFDKNYLAQNFLAFFKRDYHRVATLHLESGWVPPDTRVEELESAIRAVCEPYFDRALKDISLGQVLMRLFSTSRRFNVEIQPQLVLLQKTMLNVEGLGRSLDPELDLWKTAKPYLERWMTEQIGLRGWYERFKVEAPQWSKTLPQLPRLVHQALISHHEAPRAISDDLIRQILVEQRRTNRLLQALLVFGLAVGAGAVIARVLIVLAYGG</sequence>
<dbReference type="EC" id="2.7.-.-" evidence="1"/>
<dbReference type="EMBL" id="CP000548">
    <property type="protein sequence ID" value="ABO04628.1"/>
    <property type="molecule type" value="Genomic_DNA"/>
</dbReference>
<dbReference type="RefSeq" id="WP_004189815.1">
    <property type="nucleotide sequence ID" value="NZ_CP007802.1"/>
</dbReference>
<dbReference type="SMR" id="A3MNU1"/>
<dbReference type="GeneID" id="93059152"/>
<dbReference type="KEGG" id="bmaz:BM44_889"/>
<dbReference type="KEGG" id="bmn:BMA10247_2401"/>
<dbReference type="PATRIC" id="fig|320389.8.peg.989"/>
<dbReference type="UniPathway" id="UPA00232"/>
<dbReference type="GO" id="GO:0005886">
    <property type="term" value="C:plasma membrane"/>
    <property type="evidence" value="ECO:0007669"/>
    <property type="project" value="UniProtKB-SubCell"/>
</dbReference>
<dbReference type="GO" id="GO:0005524">
    <property type="term" value="F:ATP binding"/>
    <property type="evidence" value="ECO:0007669"/>
    <property type="project" value="UniProtKB-KW"/>
</dbReference>
<dbReference type="GO" id="GO:0004672">
    <property type="term" value="F:protein kinase activity"/>
    <property type="evidence" value="ECO:0007669"/>
    <property type="project" value="UniProtKB-UniRule"/>
</dbReference>
<dbReference type="GO" id="GO:0010795">
    <property type="term" value="P:regulation of ubiquinone biosynthetic process"/>
    <property type="evidence" value="ECO:0007669"/>
    <property type="project" value="UniProtKB-UniRule"/>
</dbReference>
<dbReference type="GO" id="GO:0006744">
    <property type="term" value="P:ubiquinone biosynthetic process"/>
    <property type="evidence" value="ECO:0007669"/>
    <property type="project" value="UniProtKB-UniPathway"/>
</dbReference>
<dbReference type="CDD" id="cd13972">
    <property type="entry name" value="UbiB"/>
    <property type="match status" value="1"/>
</dbReference>
<dbReference type="HAMAP" id="MF_00414">
    <property type="entry name" value="UbiB"/>
    <property type="match status" value="1"/>
</dbReference>
<dbReference type="InterPro" id="IPR004147">
    <property type="entry name" value="ABC1_dom"/>
</dbReference>
<dbReference type="InterPro" id="IPR011009">
    <property type="entry name" value="Kinase-like_dom_sf"/>
</dbReference>
<dbReference type="InterPro" id="IPR010232">
    <property type="entry name" value="UbiB"/>
</dbReference>
<dbReference type="InterPro" id="IPR045308">
    <property type="entry name" value="UbiB_bact"/>
</dbReference>
<dbReference type="InterPro" id="IPR050154">
    <property type="entry name" value="UbiB_kinase"/>
</dbReference>
<dbReference type="NCBIfam" id="NF003404">
    <property type="entry name" value="PRK04750.1"/>
    <property type="match status" value="1"/>
</dbReference>
<dbReference type="NCBIfam" id="TIGR01982">
    <property type="entry name" value="UbiB"/>
    <property type="match status" value="1"/>
</dbReference>
<dbReference type="PANTHER" id="PTHR10566">
    <property type="entry name" value="CHAPERONE-ACTIVITY OF BC1 COMPLEX CABC1 -RELATED"/>
    <property type="match status" value="1"/>
</dbReference>
<dbReference type="PANTHER" id="PTHR10566:SF113">
    <property type="entry name" value="PROTEIN ACTIVITY OF BC1 COMPLEX KINASE 7, CHLOROPLASTIC"/>
    <property type="match status" value="1"/>
</dbReference>
<dbReference type="Pfam" id="PF03109">
    <property type="entry name" value="ABC1"/>
    <property type="match status" value="1"/>
</dbReference>
<dbReference type="SUPFAM" id="SSF56112">
    <property type="entry name" value="Protein kinase-like (PK-like)"/>
    <property type="match status" value="1"/>
</dbReference>
<accession>A3MNU1</accession>
<evidence type="ECO:0000255" key="1">
    <source>
        <dbReference type="HAMAP-Rule" id="MF_00414"/>
    </source>
</evidence>